<dbReference type="EMBL" id="AP009484">
    <property type="protein sequence ID" value="BAH18014.1"/>
    <property type="molecule type" value="Genomic_DNA"/>
</dbReference>
<dbReference type="RefSeq" id="WP_012657212.1">
    <property type="nucleotide sequence ID" value="NC_011999.1"/>
</dbReference>
<dbReference type="SMR" id="B9E746"/>
<dbReference type="STRING" id="458233.MCCL_1307"/>
<dbReference type="GeneID" id="61128793"/>
<dbReference type="KEGG" id="mcl:MCCL_1307"/>
<dbReference type="eggNOG" id="COG0218">
    <property type="taxonomic scope" value="Bacteria"/>
</dbReference>
<dbReference type="HOGENOM" id="CLU_033732_3_0_9"/>
<dbReference type="OrthoDB" id="9804921at2"/>
<dbReference type="Proteomes" id="UP000001383">
    <property type="component" value="Chromosome"/>
</dbReference>
<dbReference type="GO" id="GO:0005829">
    <property type="term" value="C:cytosol"/>
    <property type="evidence" value="ECO:0007669"/>
    <property type="project" value="TreeGrafter"/>
</dbReference>
<dbReference type="GO" id="GO:0005525">
    <property type="term" value="F:GTP binding"/>
    <property type="evidence" value="ECO:0007669"/>
    <property type="project" value="UniProtKB-UniRule"/>
</dbReference>
<dbReference type="GO" id="GO:0046872">
    <property type="term" value="F:metal ion binding"/>
    <property type="evidence" value="ECO:0007669"/>
    <property type="project" value="UniProtKB-KW"/>
</dbReference>
<dbReference type="GO" id="GO:0000917">
    <property type="term" value="P:division septum assembly"/>
    <property type="evidence" value="ECO:0007669"/>
    <property type="project" value="UniProtKB-KW"/>
</dbReference>
<dbReference type="CDD" id="cd01876">
    <property type="entry name" value="YihA_EngB"/>
    <property type="match status" value="1"/>
</dbReference>
<dbReference type="FunFam" id="3.40.50.300:FF:000098">
    <property type="entry name" value="Probable GTP-binding protein EngB"/>
    <property type="match status" value="1"/>
</dbReference>
<dbReference type="Gene3D" id="3.40.50.300">
    <property type="entry name" value="P-loop containing nucleotide triphosphate hydrolases"/>
    <property type="match status" value="1"/>
</dbReference>
<dbReference type="HAMAP" id="MF_00321">
    <property type="entry name" value="GTPase_EngB"/>
    <property type="match status" value="1"/>
</dbReference>
<dbReference type="InterPro" id="IPR030393">
    <property type="entry name" value="G_ENGB_dom"/>
</dbReference>
<dbReference type="InterPro" id="IPR006073">
    <property type="entry name" value="GTP-bd"/>
</dbReference>
<dbReference type="InterPro" id="IPR019987">
    <property type="entry name" value="GTP-bd_ribosome_bio_YsxC"/>
</dbReference>
<dbReference type="InterPro" id="IPR027417">
    <property type="entry name" value="P-loop_NTPase"/>
</dbReference>
<dbReference type="NCBIfam" id="TIGR03598">
    <property type="entry name" value="GTPase_YsxC"/>
    <property type="match status" value="1"/>
</dbReference>
<dbReference type="PANTHER" id="PTHR11649:SF13">
    <property type="entry name" value="ENGB-TYPE G DOMAIN-CONTAINING PROTEIN"/>
    <property type="match status" value="1"/>
</dbReference>
<dbReference type="PANTHER" id="PTHR11649">
    <property type="entry name" value="MSS1/TRME-RELATED GTP-BINDING PROTEIN"/>
    <property type="match status" value="1"/>
</dbReference>
<dbReference type="Pfam" id="PF01926">
    <property type="entry name" value="MMR_HSR1"/>
    <property type="match status" value="1"/>
</dbReference>
<dbReference type="SUPFAM" id="SSF52540">
    <property type="entry name" value="P-loop containing nucleoside triphosphate hydrolases"/>
    <property type="match status" value="1"/>
</dbReference>
<dbReference type="PROSITE" id="PS51706">
    <property type="entry name" value="G_ENGB"/>
    <property type="match status" value="1"/>
</dbReference>
<sequence>MNINPNNVEIIISAVKPDQYPDTGLKEVALAGRSNVGKSSFINTMIGRKSMARISSKPGKTQTLNFFNIDEQLVFVDVPGYGYAKVSKTERERWGKMIETYITTRDNLACVIQLVDIRHNPTEDDRLMYDFLKHYEIPTIVIATKEDKIPKGKIQKHLKIIKQDLDMDSSDTLISYTALSKDKNPMIFNAIEKYL</sequence>
<keyword id="KW-0131">Cell cycle</keyword>
<keyword id="KW-0132">Cell division</keyword>
<keyword id="KW-0342">GTP-binding</keyword>
<keyword id="KW-0460">Magnesium</keyword>
<keyword id="KW-0479">Metal-binding</keyword>
<keyword id="KW-0547">Nucleotide-binding</keyword>
<keyword id="KW-1185">Reference proteome</keyword>
<keyword id="KW-0717">Septation</keyword>
<name>ENGB_MACCJ</name>
<comment type="function">
    <text evidence="1">Necessary for normal cell division and for the maintenance of normal septation.</text>
</comment>
<comment type="cofactor">
    <cofactor evidence="1">
        <name>Mg(2+)</name>
        <dbReference type="ChEBI" id="CHEBI:18420"/>
    </cofactor>
</comment>
<comment type="similarity">
    <text evidence="1">Belongs to the TRAFAC class TrmE-Era-EngA-EngB-Septin-like GTPase superfamily. EngB GTPase family.</text>
</comment>
<reference key="1">
    <citation type="journal article" date="2009" name="J. Bacteriol.">
        <title>Complete genome sequence of Macrococcus caseolyticus strain JCSCS5402, reflecting the ancestral genome of the human-pathogenic staphylococci.</title>
        <authorList>
            <person name="Baba T."/>
            <person name="Kuwahara-Arai K."/>
            <person name="Uchiyama I."/>
            <person name="Takeuchi F."/>
            <person name="Ito T."/>
            <person name="Hiramatsu K."/>
        </authorList>
    </citation>
    <scope>NUCLEOTIDE SEQUENCE [LARGE SCALE GENOMIC DNA]</scope>
    <source>
        <strain>JCSC5402</strain>
    </source>
</reference>
<feature type="chain" id="PRO_1000189929" description="Probable GTP-binding protein EngB">
    <location>
        <begin position="1"/>
        <end position="195"/>
    </location>
</feature>
<feature type="domain" description="EngB-type G" evidence="1">
    <location>
        <begin position="24"/>
        <end position="195"/>
    </location>
</feature>
<feature type="binding site" evidence="1">
    <location>
        <begin position="32"/>
        <end position="39"/>
    </location>
    <ligand>
        <name>GTP</name>
        <dbReference type="ChEBI" id="CHEBI:37565"/>
    </ligand>
</feature>
<feature type="binding site" evidence="1">
    <location>
        <position position="39"/>
    </location>
    <ligand>
        <name>Mg(2+)</name>
        <dbReference type="ChEBI" id="CHEBI:18420"/>
    </ligand>
</feature>
<feature type="binding site" evidence="1">
    <location>
        <begin position="59"/>
        <end position="63"/>
    </location>
    <ligand>
        <name>GTP</name>
        <dbReference type="ChEBI" id="CHEBI:37565"/>
    </ligand>
</feature>
<feature type="binding site" evidence="1">
    <location>
        <position position="61"/>
    </location>
    <ligand>
        <name>Mg(2+)</name>
        <dbReference type="ChEBI" id="CHEBI:18420"/>
    </ligand>
</feature>
<feature type="binding site" evidence="1">
    <location>
        <begin position="77"/>
        <end position="80"/>
    </location>
    <ligand>
        <name>GTP</name>
        <dbReference type="ChEBI" id="CHEBI:37565"/>
    </ligand>
</feature>
<feature type="binding site" evidence="1">
    <location>
        <begin position="144"/>
        <end position="147"/>
    </location>
    <ligand>
        <name>GTP</name>
        <dbReference type="ChEBI" id="CHEBI:37565"/>
    </ligand>
</feature>
<feature type="binding site" evidence="1">
    <location>
        <begin position="176"/>
        <end position="178"/>
    </location>
    <ligand>
        <name>GTP</name>
        <dbReference type="ChEBI" id="CHEBI:37565"/>
    </ligand>
</feature>
<protein>
    <recommendedName>
        <fullName evidence="1">Probable GTP-binding protein EngB</fullName>
    </recommendedName>
</protein>
<evidence type="ECO:0000255" key="1">
    <source>
        <dbReference type="HAMAP-Rule" id="MF_00321"/>
    </source>
</evidence>
<proteinExistence type="inferred from homology"/>
<accession>B9E746</accession>
<organism>
    <name type="scientific">Macrococcus caseolyticus (strain JCSC5402)</name>
    <name type="common">Macrococcoides caseolyticum</name>
    <dbReference type="NCBI Taxonomy" id="458233"/>
    <lineage>
        <taxon>Bacteria</taxon>
        <taxon>Bacillati</taxon>
        <taxon>Bacillota</taxon>
        <taxon>Bacilli</taxon>
        <taxon>Bacillales</taxon>
        <taxon>Staphylococcaceae</taxon>
        <taxon>Macrococcoides</taxon>
    </lineage>
</organism>
<gene>
    <name evidence="1" type="primary">engB</name>
    <name type="ordered locus">MCCL_1307</name>
</gene>